<protein>
    <recommendedName>
        <fullName>Phosphatidylinositol 4-kinase type 2-alpha</fullName>
        <ecNumber evidence="4">2.7.1.67</ecNumber>
    </recommendedName>
    <alternativeName>
        <fullName>Phosphatidylinositol 4-kinase type II-alpha</fullName>
    </alternativeName>
</protein>
<sequence length="471" mass="53484">MDETSPLVSPDRDQTDYSYQSQCSPGVPVCLSPNGRFSAVPGVVVRIPGSATSPIRGSAASGPSPPGSPCDRERQPLLERSQTRGAAAQAERERNKFPDDPEFAEVVKKAEKAIVRDILPERISQGSSGSYFVKNEQGEIIAVFKPKNEEPYGQLNPKWTKWLQKLCCPCCFGRDCLVLNQGYLSEAGASLVDQKLELNIVPRTKVVFLASETFNYSAIDRVKSRGKRLALEKVPKVGQRFNRIGLPPKVGSFQLFVKGYKDADYWLRRFEADPLPENTNRQLQLQFERLVVLDYIIRNTDRGNDNWLIKYDCPMDSASARDDWVMVKEPVIKIAAIDNGLAFPLKHPDSWRAYPFYWAWLPQAKIQFSQEIKDLILPKISDPNFVKDLEEDLYELFKRDPGFDRGQFRKQIAVMRGQILNLTQALKDGKSPLQLVQTPPVIVETARSHQKSTSESYTQSFQSRKPFFSWW</sequence>
<evidence type="ECO:0000250" key="1"/>
<evidence type="ECO:0000250" key="2">
    <source>
        <dbReference type="UniProtKB" id="Q2TBE6"/>
    </source>
</evidence>
<evidence type="ECO:0000250" key="3">
    <source>
        <dbReference type="UniProtKB" id="Q99M64"/>
    </source>
</evidence>
<evidence type="ECO:0000250" key="4">
    <source>
        <dbReference type="UniProtKB" id="Q9BTU6"/>
    </source>
</evidence>
<evidence type="ECO:0000255" key="5">
    <source>
        <dbReference type="PROSITE-ProRule" id="PRU00269"/>
    </source>
</evidence>
<evidence type="ECO:0000256" key="6">
    <source>
        <dbReference type="SAM" id="MobiDB-lite"/>
    </source>
</evidence>
<evidence type="ECO:0000305" key="7"/>
<accession>Q505I0</accession>
<keyword id="KW-0067">ATP-binding</keyword>
<keyword id="KW-1003">Cell membrane</keyword>
<keyword id="KW-0966">Cell projection</keyword>
<keyword id="KW-0968">Cytoplasmic vesicle</keyword>
<keyword id="KW-0967">Endosome</keyword>
<keyword id="KW-0333">Golgi apparatus</keyword>
<keyword id="KW-0418">Kinase</keyword>
<keyword id="KW-0443">Lipid metabolism</keyword>
<keyword id="KW-0449">Lipoprotein</keyword>
<keyword id="KW-0472">Membrane</keyword>
<keyword id="KW-0496">Mitochondrion</keyword>
<keyword id="KW-0547">Nucleotide-binding</keyword>
<keyword id="KW-0564">Palmitate</keyword>
<keyword id="KW-0597">Phosphoprotein</keyword>
<keyword id="KW-1185">Reference proteome</keyword>
<keyword id="KW-0770">Synapse</keyword>
<keyword id="KW-0771">Synaptosome</keyword>
<keyword id="KW-0808">Transferase</keyword>
<proteinExistence type="evidence at transcript level"/>
<name>P4K2A_XENTR</name>
<feature type="chain" id="PRO_0000285163" description="Phosphatidylinositol 4-kinase type 2-alpha">
    <location>
        <begin position="1"/>
        <end position="471"/>
    </location>
</feature>
<feature type="domain" description="PI3K/PI4K catalytic" evidence="5">
    <location>
        <begin position="117"/>
        <end position="445"/>
    </location>
</feature>
<feature type="region of interest" description="Disordered" evidence="6">
    <location>
        <begin position="1"/>
        <end position="25"/>
    </location>
</feature>
<feature type="region of interest" description="Disordered" evidence="6">
    <location>
        <begin position="48"/>
        <end position="101"/>
    </location>
</feature>
<feature type="region of interest" description="G-loop" evidence="5">
    <location>
        <begin position="123"/>
        <end position="129"/>
    </location>
</feature>
<feature type="region of interest" description="Important for substrate binding" evidence="4">
    <location>
        <begin position="150"/>
        <end position="152"/>
    </location>
</feature>
<feature type="region of interest" description="Important for interaction with membranes" evidence="4">
    <location>
        <begin position="158"/>
        <end position="171"/>
    </location>
</feature>
<feature type="region of interest" description="Important for interaction with membranes" evidence="4">
    <location>
        <begin position="261"/>
        <end position="269"/>
    </location>
</feature>
<feature type="region of interest" description="Catalytic loop" evidence="5">
    <location>
        <begin position="298"/>
        <end position="306"/>
    </location>
</feature>
<feature type="region of interest" description="Activation loop" evidence="5">
    <location>
        <begin position="336"/>
        <end position="356"/>
    </location>
</feature>
<feature type="region of interest" description="Important for interaction with membranes" evidence="4">
    <location>
        <begin position="351"/>
        <end position="360"/>
    </location>
</feature>
<feature type="compositionally biased region" description="Basic and acidic residues" evidence="6">
    <location>
        <begin position="90"/>
        <end position="101"/>
    </location>
</feature>
<feature type="binding site" evidence="4">
    <location>
        <begin position="124"/>
        <end position="130"/>
    </location>
    <ligand>
        <name>ATP</name>
        <dbReference type="ChEBI" id="CHEBI:30616"/>
    </ligand>
</feature>
<feature type="binding site" evidence="4">
    <location>
        <position position="145"/>
    </location>
    <ligand>
        <name>ATP</name>
        <dbReference type="ChEBI" id="CHEBI:30616"/>
    </ligand>
</feature>
<feature type="binding site" evidence="4">
    <location>
        <begin position="254"/>
        <end position="257"/>
    </location>
    <ligand>
        <name>ATP</name>
        <dbReference type="ChEBI" id="CHEBI:30616"/>
    </ligand>
</feature>
<feature type="binding site" evidence="4">
    <location>
        <position position="338"/>
    </location>
    <ligand>
        <name>ATP</name>
        <dbReference type="ChEBI" id="CHEBI:30616"/>
    </ligand>
</feature>
<feature type="lipid moiety-binding region" description="S-palmitoyl cysteine" evidence="1">
    <location>
        <position position="167"/>
    </location>
</feature>
<feature type="lipid moiety-binding region" description="S-palmitoyl cysteine" evidence="1">
    <location>
        <position position="168"/>
    </location>
</feature>
<feature type="lipid moiety-binding region" description="S-palmitoyl cysteine" evidence="1">
    <location>
        <position position="170"/>
    </location>
</feature>
<feature type="lipid moiety-binding region" description="S-palmitoyl cysteine" evidence="1">
    <location>
        <position position="171"/>
    </location>
</feature>
<gene>
    <name type="primary">pi4k2a</name>
</gene>
<dbReference type="EC" id="2.7.1.67" evidence="4"/>
<dbReference type="EMBL" id="BC094534">
    <property type="protein sequence ID" value="AAH94534.1"/>
    <property type="molecule type" value="mRNA"/>
</dbReference>
<dbReference type="RefSeq" id="NP_001263612.1">
    <property type="nucleotide sequence ID" value="NM_001276683.1"/>
</dbReference>
<dbReference type="SMR" id="Q505I0"/>
<dbReference type="FunCoup" id="Q505I0">
    <property type="interactions" value="2083"/>
</dbReference>
<dbReference type="STRING" id="8364.ENSXETP00000008854"/>
<dbReference type="PaxDb" id="8364-ENSXETP00000029616"/>
<dbReference type="GeneID" id="594904"/>
<dbReference type="KEGG" id="xtr:594904"/>
<dbReference type="AGR" id="Xenbase:XB-GENE-491468"/>
<dbReference type="CTD" id="55361"/>
<dbReference type="Xenbase" id="XB-GENE-491468">
    <property type="gene designation" value="pi4k2a"/>
</dbReference>
<dbReference type="eggNOG" id="KOG2381">
    <property type="taxonomic scope" value="Eukaryota"/>
</dbReference>
<dbReference type="InParanoid" id="Q505I0"/>
<dbReference type="OMA" id="IKCDCPL"/>
<dbReference type="OrthoDB" id="3349449at2759"/>
<dbReference type="PhylomeDB" id="Q505I0"/>
<dbReference type="TreeFam" id="TF314740"/>
<dbReference type="Reactome" id="R-XTR-1660499">
    <property type="pathway name" value="Synthesis of PIPs at the plasma membrane"/>
</dbReference>
<dbReference type="Reactome" id="R-XTR-1660514">
    <property type="pathway name" value="Synthesis of PIPs at the Golgi membrane"/>
</dbReference>
<dbReference type="Reactome" id="R-XTR-1660516">
    <property type="pathway name" value="Synthesis of PIPs at the early endosome membrane"/>
</dbReference>
<dbReference type="Proteomes" id="UP000008143">
    <property type="component" value="Chromosome 7"/>
</dbReference>
<dbReference type="Bgee" id="ENSXETG00000013516">
    <property type="expression patterns" value="Expressed in testis and 13 other cell types or tissues"/>
</dbReference>
<dbReference type="GO" id="GO:0031410">
    <property type="term" value="C:cytoplasmic vesicle"/>
    <property type="evidence" value="ECO:0000250"/>
    <property type="project" value="UniProtKB"/>
</dbReference>
<dbReference type="GO" id="GO:0030425">
    <property type="term" value="C:dendrite"/>
    <property type="evidence" value="ECO:0000250"/>
    <property type="project" value="UniProtKB"/>
</dbReference>
<dbReference type="GO" id="GO:0005768">
    <property type="term" value="C:endosome"/>
    <property type="evidence" value="ECO:0000250"/>
    <property type="project" value="UniProtKB"/>
</dbReference>
<dbReference type="GO" id="GO:0010008">
    <property type="term" value="C:endosome membrane"/>
    <property type="evidence" value="ECO:0007669"/>
    <property type="project" value="UniProtKB-SubCell"/>
</dbReference>
<dbReference type="GO" id="GO:0005794">
    <property type="term" value="C:Golgi apparatus"/>
    <property type="evidence" value="ECO:0007669"/>
    <property type="project" value="UniProtKB-SubCell"/>
</dbReference>
<dbReference type="GO" id="GO:0035838">
    <property type="term" value="C:growing cell tip"/>
    <property type="evidence" value="ECO:0000250"/>
    <property type="project" value="UniProtKB"/>
</dbReference>
<dbReference type="GO" id="GO:0016020">
    <property type="term" value="C:membrane"/>
    <property type="evidence" value="ECO:0000250"/>
    <property type="project" value="UniProtKB"/>
</dbReference>
<dbReference type="GO" id="GO:0045121">
    <property type="term" value="C:membrane raft"/>
    <property type="evidence" value="ECO:0000250"/>
    <property type="project" value="UniProtKB"/>
</dbReference>
<dbReference type="GO" id="GO:0005739">
    <property type="term" value="C:mitochondrion"/>
    <property type="evidence" value="ECO:0000250"/>
    <property type="project" value="UniProtKB"/>
</dbReference>
<dbReference type="GO" id="GO:0043005">
    <property type="term" value="C:neuron projection"/>
    <property type="evidence" value="ECO:0000250"/>
    <property type="project" value="UniProtKB"/>
</dbReference>
<dbReference type="GO" id="GO:0043025">
    <property type="term" value="C:neuronal cell body"/>
    <property type="evidence" value="ECO:0000250"/>
    <property type="project" value="UniProtKB"/>
</dbReference>
<dbReference type="GO" id="GO:0043204">
    <property type="term" value="C:perikaryon"/>
    <property type="evidence" value="ECO:0007669"/>
    <property type="project" value="UniProtKB-SubCell"/>
</dbReference>
<dbReference type="GO" id="GO:0005886">
    <property type="term" value="C:plasma membrane"/>
    <property type="evidence" value="ECO:0000250"/>
    <property type="project" value="UniProtKB"/>
</dbReference>
<dbReference type="GO" id="GO:0042734">
    <property type="term" value="C:presynaptic membrane"/>
    <property type="evidence" value="ECO:0000250"/>
    <property type="project" value="UniProtKB"/>
</dbReference>
<dbReference type="GO" id="GO:0004430">
    <property type="term" value="F:1-phosphatidylinositol 4-kinase activity"/>
    <property type="evidence" value="ECO:0000250"/>
    <property type="project" value="UniProtKB"/>
</dbReference>
<dbReference type="GO" id="GO:0035651">
    <property type="term" value="F:AP-3 adaptor complex binding"/>
    <property type="evidence" value="ECO:0000250"/>
    <property type="project" value="UniProtKB"/>
</dbReference>
<dbReference type="GO" id="GO:0005524">
    <property type="term" value="F:ATP binding"/>
    <property type="evidence" value="ECO:0000250"/>
    <property type="project" value="UniProtKB"/>
</dbReference>
<dbReference type="GO" id="GO:0006661">
    <property type="term" value="P:phosphatidylinositol biosynthetic process"/>
    <property type="evidence" value="ECO:0000250"/>
    <property type="project" value="UniProtKB"/>
</dbReference>
<dbReference type="GO" id="GO:0046854">
    <property type="term" value="P:phosphatidylinositol phosphate biosynthetic process"/>
    <property type="evidence" value="ECO:0000250"/>
    <property type="project" value="UniProtKB"/>
</dbReference>
<dbReference type="InterPro" id="IPR039756">
    <property type="entry name" value="Lsb6/PI4K2"/>
</dbReference>
<dbReference type="InterPro" id="IPR000403">
    <property type="entry name" value="PI3/4_kinase_cat_dom"/>
</dbReference>
<dbReference type="PANTHER" id="PTHR12865:SF7">
    <property type="entry name" value="PHOSPHATIDYLINOSITOL 4-KINASE TYPE 2-ALPHA"/>
    <property type="match status" value="1"/>
</dbReference>
<dbReference type="PANTHER" id="PTHR12865">
    <property type="entry name" value="PHOSPHATIDYLINOSITOL 4-KINASE TYPE-II"/>
    <property type="match status" value="1"/>
</dbReference>
<dbReference type="Pfam" id="PF00454">
    <property type="entry name" value="PI3_PI4_kinase"/>
    <property type="match status" value="1"/>
</dbReference>
<dbReference type="PROSITE" id="PS50290">
    <property type="entry name" value="PI3_4_KINASE_3"/>
    <property type="match status" value="1"/>
</dbReference>
<comment type="function">
    <text evidence="4">Membrane-bound phosphatidylinositol-4 kinase (PI4-kinase) that catalyzes the phosphorylation of phosphatidylinositol (PI) to phosphatidylinositol 4-phosphate (PI4P), a lipid that plays important roles in endocytosis, Golgi function, protein sorting and membrane trafficking. Besides, phosphorylation of phosphatidylinositol (PI) to phosphatidylinositol 4-phosphate (PI4P) is the first committed step in the generation of phosphatidylinositol 4,5-bisphosphate (PIP2), a precursor of the second messenger inositol 1,4,5-trisphosphate (InsP3).</text>
</comment>
<comment type="catalytic activity">
    <reaction evidence="4">
        <text>a 1,2-diacyl-sn-glycero-3-phospho-(1D-myo-inositol) + ATP = a 1,2-diacyl-sn-glycero-3-phospho-(1D-myo-inositol 4-phosphate) + ADP + H(+)</text>
        <dbReference type="Rhea" id="RHEA:19877"/>
        <dbReference type="ChEBI" id="CHEBI:15378"/>
        <dbReference type="ChEBI" id="CHEBI:30616"/>
        <dbReference type="ChEBI" id="CHEBI:57880"/>
        <dbReference type="ChEBI" id="CHEBI:58178"/>
        <dbReference type="ChEBI" id="CHEBI:456216"/>
        <dbReference type="EC" id="2.7.1.67"/>
    </reaction>
</comment>
<comment type="subcellular location">
    <subcellularLocation>
        <location evidence="4">Golgi apparatus</location>
        <location evidence="4">trans-Golgi network membrane</location>
        <topology evidence="4">Lipid-anchor</topology>
    </subcellularLocation>
    <subcellularLocation>
        <location evidence="4">Membrane raft</location>
    </subcellularLocation>
    <subcellularLocation>
        <location evidence="3">Endosome</location>
    </subcellularLocation>
    <subcellularLocation>
        <location evidence="4">Endosome membrane</location>
    </subcellularLocation>
    <subcellularLocation>
        <location evidence="3">Cytoplasmic vesicle</location>
    </subcellularLocation>
    <subcellularLocation>
        <location evidence="2">Cell projection</location>
        <location evidence="2">Dendrite</location>
    </subcellularLocation>
    <subcellularLocation>
        <location evidence="2">Presynaptic cell membrane</location>
    </subcellularLocation>
    <subcellularLocation>
        <location evidence="2">Synapse</location>
        <location evidence="2">Synaptosome</location>
    </subcellularLocation>
    <subcellularLocation>
        <location evidence="2">Mitochondrion</location>
    </subcellularLocation>
    <subcellularLocation>
        <location evidence="2">Membrane</location>
    </subcellularLocation>
    <subcellularLocation>
        <location evidence="4">Cell membrane</location>
    </subcellularLocation>
    <subcellularLocation>
        <location evidence="2">Perikaryon</location>
    </subcellularLocation>
    <subcellularLocation>
        <location evidence="2">Cell projection</location>
        <location evidence="2">Neuron projection</location>
    </subcellularLocation>
</comment>
<comment type="similarity">
    <text evidence="7">Belongs to the PI3/PI4-kinase family. Type II PI4K subfamily.</text>
</comment>
<reference key="1">
    <citation type="submission" date="2005-05" db="EMBL/GenBank/DDBJ databases">
        <authorList>
            <consortium name="NIH - Xenopus Gene Collection (XGC) project"/>
        </authorList>
    </citation>
    <scope>NUCLEOTIDE SEQUENCE [LARGE SCALE MRNA]</scope>
</reference>
<organism>
    <name type="scientific">Xenopus tropicalis</name>
    <name type="common">Western clawed frog</name>
    <name type="synonym">Silurana tropicalis</name>
    <dbReference type="NCBI Taxonomy" id="8364"/>
    <lineage>
        <taxon>Eukaryota</taxon>
        <taxon>Metazoa</taxon>
        <taxon>Chordata</taxon>
        <taxon>Craniata</taxon>
        <taxon>Vertebrata</taxon>
        <taxon>Euteleostomi</taxon>
        <taxon>Amphibia</taxon>
        <taxon>Batrachia</taxon>
        <taxon>Anura</taxon>
        <taxon>Pipoidea</taxon>
        <taxon>Pipidae</taxon>
        <taxon>Xenopodinae</taxon>
        <taxon>Xenopus</taxon>
        <taxon>Silurana</taxon>
    </lineage>
</organism>